<reference key="1">
    <citation type="journal article" date="2009" name="Genome Biol.">
        <title>Genomic and genetic analyses of diversity and plant interactions of Pseudomonas fluorescens.</title>
        <authorList>
            <person name="Silby M.W."/>
            <person name="Cerdeno-Tarraga A.M."/>
            <person name="Vernikos G.S."/>
            <person name="Giddens S.R."/>
            <person name="Jackson R.W."/>
            <person name="Preston G.M."/>
            <person name="Zhang X.-X."/>
            <person name="Moon C.D."/>
            <person name="Gehrig S.M."/>
            <person name="Godfrey S.A.C."/>
            <person name="Knight C.G."/>
            <person name="Malone J.G."/>
            <person name="Robinson Z."/>
            <person name="Spiers A.J."/>
            <person name="Harris S."/>
            <person name="Challis G.L."/>
            <person name="Yaxley A.M."/>
            <person name="Harris D."/>
            <person name="Seeger K."/>
            <person name="Murphy L."/>
            <person name="Rutter S."/>
            <person name="Squares R."/>
            <person name="Quail M.A."/>
            <person name="Saunders E."/>
            <person name="Mavromatis K."/>
            <person name="Brettin T.S."/>
            <person name="Bentley S.D."/>
            <person name="Hothersall J."/>
            <person name="Stephens E."/>
            <person name="Thomas C.M."/>
            <person name="Parkhill J."/>
            <person name="Levy S.B."/>
            <person name="Rainey P.B."/>
            <person name="Thomson N.R."/>
        </authorList>
    </citation>
    <scope>NUCLEOTIDE SEQUENCE [LARGE SCALE GENOMIC DNA]</scope>
    <source>
        <strain>SBW25</strain>
    </source>
</reference>
<keyword id="KW-1003">Cell membrane</keyword>
<keyword id="KW-0408">Iron</keyword>
<keyword id="KW-0472">Membrane</keyword>
<keyword id="KW-0479">Metal-binding</keyword>
<keyword id="KW-0503">Monooxygenase</keyword>
<keyword id="KW-0560">Oxidoreductase</keyword>
<keyword id="KW-0831">Ubiquinone biosynthesis</keyword>
<evidence type="ECO:0000255" key="1">
    <source>
        <dbReference type="HAMAP-Rule" id="MF_01658"/>
    </source>
</evidence>
<gene>
    <name evidence="1" type="primary">coq7</name>
    <name type="ordered locus">PFLU_5554</name>
</gene>
<name>COQ7_PSEFS</name>
<feature type="chain" id="PRO_1000215856" description="3-demethoxyubiquinol 3-hydroxylase">
    <location>
        <begin position="1"/>
        <end position="215"/>
    </location>
</feature>
<feature type="binding site" evidence="1">
    <location>
        <position position="64"/>
    </location>
    <ligand>
        <name>Fe cation</name>
        <dbReference type="ChEBI" id="CHEBI:24875"/>
        <label>1</label>
    </ligand>
</feature>
<feature type="binding site" evidence="1">
    <location>
        <position position="94"/>
    </location>
    <ligand>
        <name>Fe cation</name>
        <dbReference type="ChEBI" id="CHEBI:24875"/>
        <label>1</label>
    </ligand>
</feature>
<feature type="binding site" evidence="1">
    <location>
        <position position="94"/>
    </location>
    <ligand>
        <name>Fe cation</name>
        <dbReference type="ChEBI" id="CHEBI:24875"/>
        <label>2</label>
    </ligand>
</feature>
<feature type="binding site" evidence="1">
    <location>
        <position position="97"/>
    </location>
    <ligand>
        <name>Fe cation</name>
        <dbReference type="ChEBI" id="CHEBI:24875"/>
        <label>1</label>
    </ligand>
</feature>
<feature type="binding site" evidence="1">
    <location>
        <position position="146"/>
    </location>
    <ligand>
        <name>Fe cation</name>
        <dbReference type="ChEBI" id="CHEBI:24875"/>
        <label>2</label>
    </ligand>
</feature>
<feature type="binding site" evidence="1">
    <location>
        <position position="178"/>
    </location>
    <ligand>
        <name>Fe cation</name>
        <dbReference type="ChEBI" id="CHEBI:24875"/>
        <label>1</label>
    </ligand>
</feature>
<feature type="binding site" evidence="1">
    <location>
        <position position="178"/>
    </location>
    <ligand>
        <name>Fe cation</name>
        <dbReference type="ChEBI" id="CHEBI:24875"/>
        <label>2</label>
    </ligand>
</feature>
<feature type="binding site" evidence="1">
    <location>
        <position position="181"/>
    </location>
    <ligand>
        <name>Fe cation</name>
        <dbReference type="ChEBI" id="CHEBI:24875"/>
        <label>2</label>
    </ligand>
</feature>
<comment type="function">
    <text evidence="1">Catalyzes the hydroxylation of 2-nonaprenyl-3-methyl-6-methoxy-1,4-benzoquinol during ubiquinone biosynthesis.</text>
</comment>
<comment type="catalytic activity">
    <reaction evidence="1">
        <text>a 5-methoxy-2-methyl-3-(all-trans-polyprenyl)benzene-1,4-diol + AH2 + O2 = a 3-demethylubiquinol + A + H2O</text>
        <dbReference type="Rhea" id="RHEA:50908"/>
        <dbReference type="Rhea" id="RHEA-COMP:10859"/>
        <dbReference type="Rhea" id="RHEA-COMP:10914"/>
        <dbReference type="ChEBI" id="CHEBI:13193"/>
        <dbReference type="ChEBI" id="CHEBI:15377"/>
        <dbReference type="ChEBI" id="CHEBI:15379"/>
        <dbReference type="ChEBI" id="CHEBI:17499"/>
        <dbReference type="ChEBI" id="CHEBI:84167"/>
        <dbReference type="ChEBI" id="CHEBI:84422"/>
        <dbReference type="EC" id="1.14.99.60"/>
    </reaction>
</comment>
<comment type="cofactor">
    <cofactor evidence="1">
        <name>Fe cation</name>
        <dbReference type="ChEBI" id="CHEBI:24875"/>
    </cofactor>
    <text evidence="1">Binds 2 iron ions per subunit.</text>
</comment>
<comment type="pathway">
    <text evidence="1">Cofactor biosynthesis; ubiquinone biosynthesis.</text>
</comment>
<comment type="subcellular location">
    <subcellularLocation>
        <location evidence="1">Cell membrane</location>
        <topology evidence="1">Peripheral membrane protein</topology>
    </subcellularLocation>
</comment>
<comment type="similarity">
    <text evidence="1">Belongs to the COQ7 family.</text>
</comment>
<organism>
    <name type="scientific">Pseudomonas fluorescens (strain SBW25)</name>
    <dbReference type="NCBI Taxonomy" id="216595"/>
    <lineage>
        <taxon>Bacteria</taxon>
        <taxon>Pseudomonadati</taxon>
        <taxon>Pseudomonadota</taxon>
        <taxon>Gammaproteobacteria</taxon>
        <taxon>Pseudomonadales</taxon>
        <taxon>Pseudomonadaceae</taxon>
        <taxon>Pseudomonas</taxon>
    </lineage>
</organism>
<accession>C3K303</accession>
<dbReference type="EC" id="1.14.99.60" evidence="1"/>
<dbReference type="EMBL" id="AM181176">
    <property type="protein sequence ID" value="CAY52809.1"/>
    <property type="molecule type" value="Genomic_DNA"/>
</dbReference>
<dbReference type="RefSeq" id="WP_015886151.1">
    <property type="nucleotide sequence ID" value="NC_012660.1"/>
</dbReference>
<dbReference type="SMR" id="C3K303"/>
<dbReference type="STRING" id="294.SRM1_05211"/>
<dbReference type="GeneID" id="93467185"/>
<dbReference type="eggNOG" id="COG2941">
    <property type="taxonomic scope" value="Bacteria"/>
</dbReference>
<dbReference type="HOGENOM" id="CLU_088601_0_0_6"/>
<dbReference type="OrthoDB" id="5192789at2"/>
<dbReference type="UniPathway" id="UPA00232"/>
<dbReference type="GO" id="GO:0005886">
    <property type="term" value="C:plasma membrane"/>
    <property type="evidence" value="ECO:0007669"/>
    <property type="project" value="UniProtKB-SubCell"/>
</dbReference>
<dbReference type="GO" id="GO:0008682">
    <property type="term" value="F:3-demethoxyubiquinol 3-hydroxylase activity"/>
    <property type="evidence" value="ECO:0007669"/>
    <property type="project" value="UniProtKB-EC"/>
</dbReference>
<dbReference type="GO" id="GO:0046872">
    <property type="term" value="F:metal ion binding"/>
    <property type="evidence" value="ECO:0007669"/>
    <property type="project" value="UniProtKB-KW"/>
</dbReference>
<dbReference type="GO" id="GO:0006744">
    <property type="term" value="P:ubiquinone biosynthetic process"/>
    <property type="evidence" value="ECO:0007669"/>
    <property type="project" value="UniProtKB-UniRule"/>
</dbReference>
<dbReference type="CDD" id="cd01042">
    <property type="entry name" value="DMQH"/>
    <property type="match status" value="1"/>
</dbReference>
<dbReference type="FunFam" id="1.20.1260.10:FF:000013">
    <property type="entry name" value="2-nonaprenyl-3-methyl-6-methoxy-1,4-benzoquinol hydroxylase"/>
    <property type="match status" value="1"/>
</dbReference>
<dbReference type="Gene3D" id="1.20.1260.10">
    <property type="match status" value="1"/>
</dbReference>
<dbReference type="HAMAP" id="MF_01658">
    <property type="entry name" value="COQ7"/>
    <property type="match status" value="1"/>
</dbReference>
<dbReference type="InterPro" id="IPR047809">
    <property type="entry name" value="COQ7_proteobact"/>
</dbReference>
<dbReference type="InterPro" id="IPR012347">
    <property type="entry name" value="Ferritin-like"/>
</dbReference>
<dbReference type="InterPro" id="IPR009078">
    <property type="entry name" value="Ferritin-like_SF"/>
</dbReference>
<dbReference type="InterPro" id="IPR011566">
    <property type="entry name" value="Ubq_synth_Coq7"/>
</dbReference>
<dbReference type="NCBIfam" id="NF033656">
    <property type="entry name" value="DMQ_monoox_COQ7"/>
    <property type="match status" value="1"/>
</dbReference>
<dbReference type="PANTHER" id="PTHR11237:SF4">
    <property type="entry name" value="5-DEMETHOXYUBIQUINONE HYDROXYLASE, MITOCHONDRIAL"/>
    <property type="match status" value="1"/>
</dbReference>
<dbReference type="PANTHER" id="PTHR11237">
    <property type="entry name" value="COENZYME Q10 BIOSYNTHESIS PROTEIN 7"/>
    <property type="match status" value="1"/>
</dbReference>
<dbReference type="Pfam" id="PF03232">
    <property type="entry name" value="COQ7"/>
    <property type="match status" value="1"/>
</dbReference>
<dbReference type="SUPFAM" id="SSF47240">
    <property type="entry name" value="Ferritin-like"/>
    <property type="match status" value="1"/>
</dbReference>
<sequence length="215" mass="23881">MTTQRHYSPIDRLLLQADMAMRTLLPFSGQPYRPSPAIVQPDAQMSETETRHVAGLMRINHTGEVCAQALYQGQALTAKLPQVRAAMEHAAEEEIDHLAWCEQRIRQLGSHPSVLNPLFYGLSFGIGAAAGLISDKVSLGFVAATEHQVCKHLDEHLEQLPAEDEKSRAILEQMRIDEEHHAESALDAGGFRFPAPVRFGMSLLAKVMTKSTYRI</sequence>
<protein>
    <recommendedName>
        <fullName evidence="1">3-demethoxyubiquinol 3-hydroxylase</fullName>
        <shortName evidence="1">DMQ hydroxylase</shortName>
        <ecNumber evidence="1">1.14.99.60</ecNumber>
    </recommendedName>
    <alternativeName>
        <fullName evidence="1">2-nonaprenyl-3-methyl-6-methoxy-1,4-benzoquinol hydroxylase</fullName>
    </alternativeName>
</protein>
<proteinExistence type="inferred from homology"/>